<feature type="chain" id="PRO_0000317188" description="Protein BNIP5">
    <location>
        <begin position="1"/>
        <end position="669"/>
    </location>
</feature>
<feature type="region of interest" description="Disordered" evidence="2">
    <location>
        <begin position="1"/>
        <end position="116"/>
    </location>
</feature>
<feature type="region of interest" description="Disordered" evidence="2">
    <location>
        <begin position="131"/>
        <end position="259"/>
    </location>
</feature>
<feature type="region of interest" description="Disordered" evidence="2">
    <location>
        <begin position="273"/>
        <end position="401"/>
    </location>
</feature>
<feature type="region of interest" description="Disordered" evidence="2">
    <location>
        <begin position="413"/>
        <end position="544"/>
    </location>
</feature>
<feature type="compositionally biased region" description="Basic and acidic residues" evidence="2">
    <location>
        <begin position="34"/>
        <end position="47"/>
    </location>
</feature>
<feature type="compositionally biased region" description="Polar residues" evidence="2">
    <location>
        <begin position="48"/>
        <end position="73"/>
    </location>
</feature>
<feature type="compositionally biased region" description="Basic and acidic residues" evidence="2">
    <location>
        <begin position="104"/>
        <end position="113"/>
    </location>
</feature>
<feature type="compositionally biased region" description="Basic and acidic residues" evidence="2">
    <location>
        <begin position="131"/>
        <end position="148"/>
    </location>
</feature>
<feature type="compositionally biased region" description="Basic residues" evidence="2">
    <location>
        <begin position="158"/>
        <end position="175"/>
    </location>
</feature>
<feature type="compositionally biased region" description="Pro residues" evidence="2">
    <location>
        <begin position="285"/>
        <end position="295"/>
    </location>
</feature>
<feature type="compositionally biased region" description="Polar residues" evidence="2">
    <location>
        <begin position="346"/>
        <end position="357"/>
    </location>
</feature>
<feature type="compositionally biased region" description="Basic and acidic residues" evidence="2">
    <location>
        <begin position="390"/>
        <end position="401"/>
    </location>
</feature>
<feature type="compositionally biased region" description="Basic residues" evidence="2">
    <location>
        <begin position="445"/>
        <end position="462"/>
    </location>
</feature>
<feature type="compositionally biased region" description="Low complexity" evidence="2">
    <location>
        <begin position="516"/>
        <end position="528"/>
    </location>
</feature>
<feature type="cross-link" description="Glycyl lysine isopeptide (Lys-Gly) (interchain with G-Cter in SUMO2)" evidence="1">
    <location>
        <position position="314"/>
    </location>
</feature>
<feature type="sequence conflict" description="In Ref. 3; AAI17931." evidence="3" ref="3">
    <original>A</original>
    <variation>V</variation>
    <location>
        <position position="63"/>
    </location>
</feature>
<protein>
    <recommendedName>
        <fullName evidence="3">Protein BNIP5</fullName>
    </recommendedName>
</protein>
<name>BNIP5_MOUSE</name>
<reference key="1">
    <citation type="journal article" date="2005" name="Science">
        <title>The transcriptional landscape of the mammalian genome.</title>
        <authorList>
            <person name="Carninci P."/>
            <person name="Kasukawa T."/>
            <person name="Katayama S."/>
            <person name="Gough J."/>
            <person name="Frith M.C."/>
            <person name="Maeda N."/>
            <person name="Oyama R."/>
            <person name="Ravasi T."/>
            <person name="Lenhard B."/>
            <person name="Wells C."/>
            <person name="Kodzius R."/>
            <person name="Shimokawa K."/>
            <person name="Bajic V.B."/>
            <person name="Brenner S.E."/>
            <person name="Batalov S."/>
            <person name="Forrest A.R."/>
            <person name="Zavolan M."/>
            <person name="Davis M.J."/>
            <person name="Wilming L.G."/>
            <person name="Aidinis V."/>
            <person name="Allen J.E."/>
            <person name="Ambesi-Impiombato A."/>
            <person name="Apweiler R."/>
            <person name="Aturaliya R.N."/>
            <person name="Bailey T.L."/>
            <person name="Bansal M."/>
            <person name="Baxter L."/>
            <person name="Beisel K.W."/>
            <person name="Bersano T."/>
            <person name="Bono H."/>
            <person name="Chalk A.M."/>
            <person name="Chiu K.P."/>
            <person name="Choudhary V."/>
            <person name="Christoffels A."/>
            <person name="Clutterbuck D.R."/>
            <person name="Crowe M.L."/>
            <person name="Dalla E."/>
            <person name="Dalrymple B.P."/>
            <person name="de Bono B."/>
            <person name="Della Gatta G."/>
            <person name="di Bernardo D."/>
            <person name="Down T."/>
            <person name="Engstrom P."/>
            <person name="Fagiolini M."/>
            <person name="Faulkner G."/>
            <person name="Fletcher C.F."/>
            <person name="Fukushima T."/>
            <person name="Furuno M."/>
            <person name="Futaki S."/>
            <person name="Gariboldi M."/>
            <person name="Georgii-Hemming P."/>
            <person name="Gingeras T.R."/>
            <person name="Gojobori T."/>
            <person name="Green R.E."/>
            <person name="Gustincich S."/>
            <person name="Harbers M."/>
            <person name="Hayashi Y."/>
            <person name="Hensch T.K."/>
            <person name="Hirokawa N."/>
            <person name="Hill D."/>
            <person name="Huminiecki L."/>
            <person name="Iacono M."/>
            <person name="Ikeo K."/>
            <person name="Iwama A."/>
            <person name="Ishikawa T."/>
            <person name="Jakt M."/>
            <person name="Kanapin A."/>
            <person name="Katoh M."/>
            <person name="Kawasawa Y."/>
            <person name="Kelso J."/>
            <person name="Kitamura H."/>
            <person name="Kitano H."/>
            <person name="Kollias G."/>
            <person name="Krishnan S.P."/>
            <person name="Kruger A."/>
            <person name="Kummerfeld S.K."/>
            <person name="Kurochkin I.V."/>
            <person name="Lareau L.F."/>
            <person name="Lazarevic D."/>
            <person name="Lipovich L."/>
            <person name="Liu J."/>
            <person name="Liuni S."/>
            <person name="McWilliam S."/>
            <person name="Madan Babu M."/>
            <person name="Madera M."/>
            <person name="Marchionni L."/>
            <person name="Matsuda H."/>
            <person name="Matsuzawa S."/>
            <person name="Miki H."/>
            <person name="Mignone F."/>
            <person name="Miyake S."/>
            <person name="Morris K."/>
            <person name="Mottagui-Tabar S."/>
            <person name="Mulder N."/>
            <person name="Nakano N."/>
            <person name="Nakauchi H."/>
            <person name="Ng P."/>
            <person name="Nilsson R."/>
            <person name="Nishiguchi S."/>
            <person name="Nishikawa S."/>
            <person name="Nori F."/>
            <person name="Ohara O."/>
            <person name="Okazaki Y."/>
            <person name="Orlando V."/>
            <person name="Pang K.C."/>
            <person name="Pavan W.J."/>
            <person name="Pavesi G."/>
            <person name="Pesole G."/>
            <person name="Petrovsky N."/>
            <person name="Piazza S."/>
            <person name="Reed J."/>
            <person name="Reid J.F."/>
            <person name="Ring B.Z."/>
            <person name="Ringwald M."/>
            <person name="Rost B."/>
            <person name="Ruan Y."/>
            <person name="Salzberg S.L."/>
            <person name="Sandelin A."/>
            <person name="Schneider C."/>
            <person name="Schoenbach C."/>
            <person name="Sekiguchi K."/>
            <person name="Semple C.A."/>
            <person name="Seno S."/>
            <person name="Sessa L."/>
            <person name="Sheng Y."/>
            <person name="Shibata Y."/>
            <person name="Shimada H."/>
            <person name="Shimada K."/>
            <person name="Silva D."/>
            <person name="Sinclair B."/>
            <person name="Sperling S."/>
            <person name="Stupka E."/>
            <person name="Sugiura K."/>
            <person name="Sultana R."/>
            <person name="Takenaka Y."/>
            <person name="Taki K."/>
            <person name="Tammoja K."/>
            <person name="Tan S.L."/>
            <person name="Tang S."/>
            <person name="Taylor M.S."/>
            <person name="Tegner J."/>
            <person name="Teichmann S.A."/>
            <person name="Ueda H.R."/>
            <person name="van Nimwegen E."/>
            <person name="Verardo R."/>
            <person name="Wei C.L."/>
            <person name="Yagi K."/>
            <person name="Yamanishi H."/>
            <person name="Zabarovsky E."/>
            <person name="Zhu S."/>
            <person name="Zimmer A."/>
            <person name="Hide W."/>
            <person name="Bult C."/>
            <person name="Grimmond S.M."/>
            <person name="Teasdale R.D."/>
            <person name="Liu E.T."/>
            <person name="Brusic V."/>
            <person name="Quackenbush J."/>
            <person name="Wahlestedt C."/>
            <person name="Mattick J.S."/>
            <person name="Hume D.A."/>
            <person name="Kai C."/>
            <person name="Sasaki D."/>
            <person name="Tomaru Y."/>
            <person name="Fukuda S."/>
            <person name="Kanamori-Katayama M."/>
            <person name="Suzuki M."/>
            <person name="Aoki J."/>
            <person name="Arakawa T."/>
            <person name="Iida J."/>
            <person name="Imamura K."/>
            <person name="Itoh M."/>
            <person name="Kato T."/>
            <person name="Kawaji H."/>
            <person name="Kawagashira N."/>
            <person name="Kawashima T."/>
            <person name="Kojima M."/>
            <person name="Kondo S."/>
            <person name="Konno H."/>
            <person name="Nakano K."/>
            <person name="Ninomiya N."/>
            <person name="Nishio T."/>
            <person name="Okada M."/>
            <person name="Plessy C."/>
            <person name="Shibata K."/>
            <person name="Shiraki T."/>
            <person name="Suzuki S."/>
            <person name="Tagami M."/>
            <person name="Waki K."/>
            <person name="Watahiki A."/>
            <person name="Okamura-Oho Y."/>
            <person name="Suzuki H."/>
            <person name="Kawai J."/>
            <person name="Hayashizaki Y."/>
        </authorList>
    </citation>
    <scope>NUCLEOTIDE SEQUENCE [LARGE SCALE MRNA]</scope>
    <source>
        <strain>C57BL/6J</strain>
        <tissue>Cecum</tissue>
    </source>
</reference>
<reference key="2">
    <citation type="journal article" date="2009" name="PLoS Biol.">
        <title>Lineage-specific biology revealed by a finished genome assembly of the mouse.</title>
        <authorList>
            <person name="Church D.M."/>
            <person name="Goodstadt L."/>
            <person name="Hillier L.W."/>
            <person name="Zody M.C."/>
            <person name="Goldstein S."/>
            <person name="She X."/>
            <person name="Bult C.J."/>
            <person name="Agarwala R."/>
            <person name="Cherry J.L."/>
            <person name="DiCuccio M."/>
            <person name="Hlavina W."/>
            <person name="Kapustin Y."/>
            <person name="Meric P."/>
            <person name="Maglott D."/>
            <person name="Birtle Z."/>
            <person name="Marques A.C."/>
            <person name="Graves T."/>
            <person name="Zhou S."/>
            <person name="Teague B."/>
            <person name="Potamousis K."/>
            <person name="Churas C."/>
            <person name="Place M."/>
            <person name="Herschleb J."/>
            <person name="Runnheim R."/>
            <person name="Forrest D."/>
            <person name="Amos-Landgraf J."/>
            <person name="Schwartz D.C."/>
            <person name="Cheng Z."/>
            <person name="Lindblad-Toh K."/>
            <person name="Eichler E.E."/>
            <person name="Ponting C.P."/>
        </authorList>
    </citation>
    <scope>NUCLEOTIDE SEQUENCE [LARGE SCALE GENOMIC DNA]</scope>
    <source>
        <strain>C57BL/6J</strain>
    </source>
</reference>
<reference key="3">
    <citation type="journal article" date="2004" name="Genome Res.">
        <title>The status, quality, and expansion of the NIH full-length cDNA project: the Mammalian Gene Collection (MGC).</title>
        <authorList>
            <consortium name="The MGC Project Team"/>
        </authorList>
    </citation>
    <scope>NUCLEOTIDE SEQUENCE [LARGE SCALE MRNA]</scope>
</reference>
<dbReference type="EMBL" id="AK033585">
    <property type="protein sequence ID" value="BAC28374.1"/>
    <property type="molecule type" value="mRNA"/>
</dbReference>
<dbReference type="EMBL" id="AC140278">
    <property type="status" value="NOT_ANNOTATED_CDS"/>
    <property type="molecule type" value="Genomic_DNA"/>
</dbReference>
<dbReference type="EMBL" id="CT025867">
    <property type="status" value="NOT_ANNOTATED_CDS"/>
    <property type="molecule type" value="Genomic_DNA"/>
</dbReference>
<dbReference type="EMBL" id="BC117930">
    <property type="protein sequence ID" value="AAI17931.1"/>
    <property type="molecule type" value="mRNA"/>
</dbReference>
<dbReference type="CCDS" id="CCDS28586.1"/>
<dbReference type="RefSeq" id="NP_766038.1">
    <property type="nucleotide sequence ID" value="NM_172450.3"/>
</dbReference>
<dbReference type="SMR" id="Q8CC96"/>
<dbReference type="FunCoup" id="Q8CC96">
    <property type="interactions" value="3"/>
</dbReference>
<dbReference type="STRING" id="10090.ENSMUSP00000050646"/>
<dbReference type="GlyGen" id="Q8CC96">
    <property type="glycosylation" value="2 sites, 1 O-linked glycan (1 site)"/>
</dbReference>
<dbReference type="iPTMnet" id="Q8CC96"/>
<dbReference type="PhosphoSitePlus" id="Q8CC96"/>
<dbReference type="PaxDb" id="10090-ENSMUSP00000050646"/>
<dbReference type="Antibodypedia" id="49825">
    <property type="antibodies" value="51 antibodies from 9 providers"/>
</dbReference>
<dbReference type="DNASU" id="207819"/>
<dbReference type="Ensembl" id="ENSMUST00000062357.6">
    <property type="protein sequence ID" value="ENSMUSP00000050646.5"/>
    <property type="gene ID" value="ENSMUSG00000048905.6"/>
</dbReference>
<dbReference type="GeneID" id="207819"/>
<dbReference type="KEGG" id="mmu:207819"/>
<dbReference type="UCSC" id="uc008bru.1">
    <property type="organism name" value="mouse"/>
</dbReference>
<dbReference type="AGR" id="MGI:1925441"/>
<dbReference type="CTD" id="389384"/>
<dbReference type="MGI" id="MGI:1925441">
    <property type="gene designation" value="Bnip5"/>
</dbReference>
<dbReference type="VEuPathDB" id="HostDB:ENSMUSG00000048905"/>
<dbReference type="eggNOG" id="ENOG502T262">
    <property type="taxonomic scope" value="Eukaryota"/>
</dbReference>
<dbReference type="GeneTree" id="ENSGT00390000001176"/>
<dbReference type="HOGENOM" id="CLU_028338_0_0_1"/>
<dbReference type="InParanoid" id="Q8CC96"/>
<dbReference type="OMA" id="WTTSDWA"/>
<dbReference type="OrthoDB" id="9836802at2759"/>
<dbReference type="PhylomeDB" id="Q8CC96"/>
<dbReference type="TreeFam" id="TF338223"/>
<dbReference type="BioGRID-ORCS" id="207819">
    <property type="hits" value="3 hits in 78 CRISPR screens"/>
</dbReference>
<dbReference type="PRO" id="PR:Q8CC96"/>
<dbReference type="Proteomes" id="UP000000589">
    <property type="component" value="Chromosome 17"/>
</dbReference>
<dbReference type="RNAct" id="Q8CC96">
    <property type="molecule type" value="protein"/>
</dbReference>
<dbReference type="Bgee" id="ENSMUSG00000048905">
    <property type="expression patterns" value="Expressed in jejunum and 107 other cell types or tissues"/>
</dbReference>
<dbReference type="ExpressionAtlas" id="Q8CC96">
    <property type="expression patterns" value="baseline and differential"/>
</dbReference>
<dbReference type="InterPro" id="IPR031362">
    <property type="entry name" value="BNIP5"/>
</dbReference>
<dbReference type="PANTHER" id="PTHR22435">
    <property type="entry name" value="CHROMOSOME 6 OPEN READING FRAME 222"/>
    <property type="match status" value="1"/>
</dbReference>
<dbReference type="PANTHER" id="PTHR22435:SF0">
    <property type="entry name" value="PROTEIN BNIP5"/>
    <property type="match status" value="1"/>
</dbReference>
<dbReference type="Pfam" id="PF15661">
    <property type="entry name" value="CF222"/>
    <property type="match status" value="1"/>
</dbReference>
<gene>
    <name type="primary">Bnip5</name>
</gene>
<keyword id="KW-1017">Isopeptide bond</keyword>
<keyword id="KW-1185">Reference proteome</keyword>
<keyword id="KW-0832">Ubl conjugation</keyword>
<organism>
    <name type="scientific">Mus musculus</name>
    <name type="common">Mouse</name>
    <dbReference type="NCBI Taxonomy" id="10090"/>
    <lineage>
        <taxon>Eukaryota</taxon>
        <taxon>Metazoa</taxon>
        <taxon>Chordata</taxon>
        <taxon>Craniata</taxon>
        <taxon>Vertebrata</taxon>
        <taxon>Euteleostomi</taxon>
        <taxon>Mammalia</taxon>
        <taxon>Eutheria</taxon>
        <taxon>Euarchontoglires</taxon>
        <taxon>Glires</taxon>
        <taxon>Rodentia</taxon>
        <taxon>Myomorpha</taxon>
        <taxon>Muroidea</taxon>
        <taxon>Muridae</taxon>
        <taxon>Murinae</taxon>
        <taxon>Mus</taxon>
        <taxon>Mus</taxon>
    </lineage>
</organism>
<sequence>MPRSRNPSQGMPRDSSDSCGLSPVETPKGKKRARSLDRQVPRKKDPESSNTRCPSSATCRRTASDGARSSESPSHFAEAQGATAAALPPGEGRGFLPSEQGPPEDTKKERLPREAQQSWLRLVLNILLMRIEEPREKASRASKGKGDLPEAAEEPALRKKSHEKRTSRKKHSHRKPIAEEPPGPQTAEAQGREDVPPSLAASSAPHEIALGLICRGGPDSDLPQALPTEGDHAETPDSFGQASGPPLEEDPRKPDQDDVIWQIVELLKKAGDQLEEEQVQIPQPEAVPPRKPTPLPRKKSQEKKSSLKRVLSLKKPASEEPKRVGTATTLGPETRPKRPSFLPLCVSSQRASTSSSLDLEAPEFQEVPSVDGGGSHPSELHTPAAIFQGPEEKPLLDRASESREFRRKILVLLQSAEDERGEQEAQAQEAEKAGENPTPAGKVKSQVKKSNLRRAFSLRKHSSKDSKKTEASGTPGSGSLEARPPKKHGFLPMCVSGHRASISSSPESLEFQKTEAAGGAPAGSPGAPFQARSHTPDEGPSPERAWESKEFMIQKLVASLQEVDRDLGRQIRKYPSFKRFFNEFSDASLRKLVATLERQKASLSEEGRSLANRPPPCAFGTLNKFAATRSCTICTLMQSRGEYKGHSYAHFLSRKAEQDITNLDSQSPD</sequence>
<accession>Q8CC96</accession>
<accession>B2KF61</accession>
<accession>Q148X2</accession>
<proteinExistence type="evidence at transcript level"/>
<evidence type="ECO:0000250" key="1">
    <source>
        <dbReference type="UniProtKB" id="P0C671"/>
    </source>
</evidence>
<evidence type="ECO:0000256" key="2">
    <source>
        <dbReference type="SAM" id="MobiDB-lite"/>
    </source>
</evidence>
<evidence type="ECO:0000305" key="3"/>